<proteinExistence type="inferred from homology"/>
<gene>
    <name evidence="1" type="primary">pcm1</name>
    <name type="ordered locus">RPB_0447</name>
</gene>
<reference key="1">
    <citation type="submission" date="2006-01" db="EMBL/GenBank/DDBJ databases">
        <title>Complete sequence of Rhodopseudomonas palustris HaA2.</title>
        <authorList>
            <consortium name="US DOE Joint Genome Institute"/>
            <person name="Copeland A."/>
            <person name="Lucas S."/>
            <person name="Lapidus A."/>
            <person name="Barry K."/>
            <person name="Detter J.C."/>
            <person name="Glavina T."/>
            <person name="Hammon N."/>
            <person name="Israni S."/>
            <person name="Pitluck S."/>
            <person name="Chain P."/>
            <person name="Malfatti S."/>
            <person name="Shin M."/>
            <person name="Vergez L."/>
            <person name="Schmutz J."/>
            <person name="Larimer F."/>
            <person name="Land M."/>
            <person name="Hauser L."/>
            <person name="Pelletier D.A."/>
            <person name="Kyrpides N."/>
            <person name="Anderson I."/>
            <person name="Oda Y."/>
            <person name="Harwood C.S."/>
            <person name="Richardson P."/>
        </authorList>
    </citation>
    <scope>NUCLEOTIDE SEQUENCE [LARGE SCALE GENOMIC DNA]</scope>
    <source>
        <strain>HaA2</strain>
    </source>
</reference>
<evidence type="ECO:0000255" key="1">
    <source>
        <dbReference type="HAMAP-Rule" id="MF_00090"/>
    </source>
</evidence>
<comment type="function">
    <text evidence="1">Catalyzes the methyl esterification of L-isoaspartyl residues in peptides and proteins that result from spontaneous decomposition of normal L-aspartyl and L-asparaginyl residues. It plays a role in the repair and/or degradation of damaged proteins.</text>
</comment>
<comment type="catalytic activity">
    <reaction evidence="1">
        <text>[protein]-L-isoaspartate + S-adenosyl-L-methionine = [protein]-L-isoaspartate alpha-methyl ester + S-adenosyl-L-homocysteine</text>
        <dbReference type="Rhea" id="RHEA:12705"/>
        <dbReference type="Rhea" id="RHEA-COMP:12143"/>
        <dbReference type="Rhea" id="RHEA-COMP:12144"/>
        <dbReference type="ChEBI" id="CHEBI:57856"/>
        <dbReference type="ChEBI" id="CHEBI:59789"/>
        <dbReference type="ChEBI" id="CHEBI:90596"/>
        <dbReference type="ChEBI" id="CHEBI:90598"/>
        <dbReference type="EC" id="2.1.1.77"/>
    </reaction>
</comment>
<comment type="subcellular location">
    <subcellularLocation>
        <location evidence="1">Cytoplasm</location>
    </subcellularLocation>
</comment>
<comment type="similarity">
    <text evidence="1">Belongs to the methyltransferase superfamily. L-isoaspartyl/D-aspartyl protein methyltransferase family.</text>
</comment>
<protein>
    <recommendedName>
        <fullName evidence="1">Protein-L-isoaspartate O-methyltransferase 1</fullName>
        <ecNumber evidence="1">2.1.1.77</ecNumber>
    </recommendedName>
    <alternativeName>
        <fullName evidence="1">L-isoaspartyl protein carboxyl methyltransferase 1</fullName>
    </alternativeName>
    <alternativeName>
        <fullName evidence="1">Protein L-isoaspartyl methyltransferase 1</fullName>
    </alternativeName>
    <alternativeName>
        <fullName evidence="1">Protein-beta-aspartate methyltransferase 1</fullName>
        <shortName evidence="1">PIMT 1</shortName>
    </alternativeName>
</protein>
<feature type="chain" id="PRO_0000351926" description="Protein-L-isoaspartate O-methyltransferase 1">
    <location>
        <begin position="1"/>
        <end position="245"/>
    </location>
</feature>
<feature type="active site" evidence="1">
    <location>
        <position position="76"/>
    </location>
</feature>
<keyword id="KW-0963">Cytoplasm</keyword>
<keyword id="KW-0489">Methyltransferase</keyword>
<keyword id="KW-1185">Reference proteome</keyword>
<keyword id="KW-0949">S-adenosyl-L-methionine</keyword>
<keyword id="KW-0808">Transferase</keyword>
<accession>Q2J302</accession>
<sequence length="245" mass="25734">MAASGSRHPPISDDATSFAAQRERMVAQQISARGVRDPLVLAAMRQVPREAFLPERMRDLAYDDSPLPIGHGQTISQPYIVAAMIEALQLNGGERVLEIGAGSGYAAAVLAQIAGEVTTIERIGALADKAAAALAALGIGNVQVRQGDGSRGWPPGAPYDAIVVAAGGPHLPQSLKTQLAIGGRLVMPVGADQSAQRLVRLTRTSVDDVRCEQLADVRFVPLIGDEGWASVAPEPRADRPATVRK</sequence>
<organism>
    <name type="scientific">Rhodopseudomonas palustris (strain HaA2)</name>
    <dbReference type="NCBI Taxonomy" id="316058"/>
    <lineage>
        <taxon>Bacteria</taxon>
        <taxon>Pseudomonadati</taxon>
        <taxon>Pseudomonadota</taxon>
        <taxon>Alphaproteobacteria</taxon>
        <taxon>Hyphomicrobiales</taxon>
        <taxon>Nitrobacteraceae</taxon>
        <taxon>Rhodopseudomonas</taxon>
    </lineage>
</organism>
<name>PIMT1_RHOP2</name>
<dbReference type="EC" id="2.1.1.77" evidence="1"/>
<dbReference type="EMBL" id="CP000250">
    <property type="protein sequence ID" value="ABD05158.1"/>
    <property type="molecule type" value="Genomic_DNA"/>
</dbReference>
<dbReference type="RefSeq" id="WP_011439348.1">
    <property type="nucleotide sequence ID" value="NC_007778.1"/>
</dbReference>
<dbReference type="SMR" id="Q2J302"/>
<dbReference type="STRING" id="316058.RPB_0447"/>
<dbReference type="KEGG" id="rpb:RPB_0447"/>
<dbReference type="eggNOG" id="COG2518">
    <property type="taxonomic scope" value="Bacteria"/>
</dbReference>
<dbReference type="HOGENOM" id="CLU_055432_2_0_5"/>
<dbReference type="OrthoDB" id="9810066at2"/>
<dbReference type="Proteomes" id="UP000008809">
    <property type="component" value="Chromosome"/>
</dbReference>
<dbReference type="GO" id="GO:0005737">
    <property type="term" value="C:cytoplasm"/>
    <property type="evidence" value="ECO:0007669"/>
    <property type="project" value="UniProtKB-SubCell"/>
</dbReference>
<dbReference type="GO" id="GO:0004719">
    <property type="term" value="F:protein-L-isoaspartate (D-aspartate) O-methyltransferase activity"/>
    <property type="evidence" value="ECO:0007669"/>
    <property type="project" value="UniProtKB-UniRule"/>
</dbReference>
<dbReference type="GO" id="GO:0032259">
    <property type="term" value="P:methylation"/>
    <property type="evidence" value="ECO:0007669"/>
    <property type="project" value="UniProtKB-KW"/>
</dbReference>
<dbReference type="GO" id="GO:0036211">
    <property type="term" value="P:protein modification process"/>
    <property type="evidence" value="ECO:0007669"/>
    <property type="project" value="UniProtKB-UniRule"/>
</dbReference>
<dbReference type="GO" id="GO:0030091">
    <property type="term" value="P:protein repair"/>
    <property type="evidence" value="ECO:0007669"/>
    <property type="project" value="UniProtKB-UniRule"/>
</dbReference>
<dbReference type="CDD" id="cd02440">
    <property type="entry name" value="AdoMet_MTases"/>
    <property type="match status" value="1"/>
</dbReference>
<dbReference type="FunFam" id="3.40.50.150:FF:000010">
    <property type="entry name" value="Protein-L-isoaspartate O-methyltransferase"/>
    <property type="match status" value="1"/>
</dbReference>
<dbReference type="Gene3D" id="3.40.50.150">
    <property type="entry name" value="Vaccinia Virus protein VP39"/>
    <property type="match status" value="1"/>
</dbReference>
<dbReference type="HAMAP" id="MF_00090">
    <property type="entry name" value="PIMT"/>
    <property type="match status" value="1"/>
</dbReference>
<dbReference type="InterPro" id="IPR000682">
    <property type="entry name" value="PCMT"/>
</dbReference>
<dbReference type="InterPro" id="IPR029063">
    <property type="entry name" value="SAM-dependent_MTases_sf"/>
</dbReference>
<dbReference type="NCBIfam" id="TIGR00080">
    <property type="entry name" value="pimt"/>
    <property type="match status" value="1"/>
</dbReference>
<dbReference type="NCBIfam" id="NF001453">
    <property type="entry name" value="PRK00312.1"/>
    <property type="match status" value="1"/>
</dbReference>
<dbReference type="PANTHER" id="PTHR11579">
    <property type="entry name" value="PROTEIN-L-ISOASPARTATE O-METHYLTRANSFERASE"/>
    <property type="match status" value="1"/>
</dbReference>
<dbReference type="PANTHER" id="PTHR11579:SF0">
    <property type="entry name" value="PROTEIN-L-ISOASPARTATE(D-ASPARTATE) O-METHYLTRANSFERASE"/>
    <property type="match status" value="1"/>
</dbReference>
<dbReference type="Pfam" id="PF01135">
    <property type="entry name" value="PCMT"/>
    <property type="match status" value="1"/>
</dbReference>
<dbReference type="SUPFAM" id="SSF53335">
    <property type="entry name" value="S-adenosyl-L-methionine-dependent methyltransferases"/>
    <property type="match status" value="1"/>
</dbReference>
<dbReference type="PROSITE" id="PS01279">
    <property type="entry name" value="PCMT"/>
    <property type="match status" value="1"/>
</dbReference>